<reference key="1">
    <citation type="submission" date="1999-06" db="EMBL/GenBank/DDBJ databases">
        <authorList>
            <person name="Malkowski B."/>
            <person name="Plesch G."/>
            <person name="Mueller-Roeber B."/>
        </authorList>
    </citation>
    <scope>NUCLEOTIDE SEQUENCE [MRNA]</scope>
    <source>
        <strain>cv. C24</strain>
    </source>
</reference>
<reference key="2">
    <citation type="journal article" date="2000" name="Nature">
        <title>Sequence and analysis of chromosome 3 of the plant Arabidopsis thaliana.</title>
        <authorList>
            <person name="Salanoubat M."/>
            <person name="Lemcke K."/>
            <person name="Rieger M."/>
            <person name="Ansorge W."/>
            <person name="Unseld M."/>
            <person name="Fartmann B."/>
            <person name="Valle G."/>
            <person name="Bloecker H."/>
            <person name="Perez-Alonso M."/>
            <person name="Obermaier B."/>
            <person name="Delseny M."/>
            <person name="Boutry M."/>
            <person name="Grivell L.A."/>
            <person name="Mache R."/>
            <person name="Puigdomenech P."/>
            <person name="De Simone V."/>
            <person name="Choisne N."/>
            <person name="Artiguenave F."/>
            <person name="Robert C."/>
            <person name="Brottier P."/>
            <person name="Wincker P."/>
            <person name="Cattolico L."/>
            <person name="Weissenbach J."/>
            <person name="Saurin W."/>
            <person name="Quetier F."/>
            <person name="Schaefer M."/>
            <person name="Mueller-Auer S."/>
            <person name="Gabel C."/>
            <person name="Fuchs M."/>
            <person name="Benes V."/>
            <person name="Wurmbach E."/>
            <person name="Drzonek H."/>
            <person name="Erfle H."/>
            <person name="Jordan N."/>
            <person name="Bangert S."/>
            <person name="Wiedelmann R."/>
            <person name="Kranz H."/>
            <person name="Voss H."/>
            <person name="Holland R."/>
            <person name="Brandt P."/>
            <person name="Nyakatura G."/>
            <person name="Vezzi A."/>
            <person name="D'Angelo M."/>
            <person name="Pallavicini A."/>
            <person name="Toppo S."/>
            <person name="Simionati B."/>
            <person name="Conrad A."/>
            <person name="Hornischer K."/>
            <person name="Kauer G."/>
            <person name="Loehnert T.-H."/>
            <person name="Nordsiek G."/>
            <person name="Reichelt J."/>
            <person name="Scharfe M."/>
            <person name="Schoen O."/>
            <person name="Bargues M."/>
            <person name="Terol J."/>
            <person name="Climent J."/>
            <person name="Navarro P."/>
            <person name="Collado C."/>
            <person name="Perez-Perez A."/>
            <person name="Ottenwaelder B."/>
            <person name="Duchemin D."/>
            <person name="Cooke R."/>
            <person name="Laudie M."/>
            <person name="Berger-Llauro C."/>
            <person name="Purnelle B."/>
            <person name="Masuy D."/>
            <person name="de Haan M."/>
            <person name="Maarse A.C."/>
            <person name="Alcaraz J.-P."/>
            <person name="Cottet A."/>
            <person name="Casacuberta E."/>
            <person name="Monfort A."/>
            <person name="Argiriou A."/>
            <person name="Flores M."/>
            <person name="Liguori R."/>
            <person name="Vitale D."/>
            <person name="Mannhaupt G."/>
            <person name="Haase D."/>
            <person name="Schoof H."/>
            <person name="Rudd S."/>
            <person name="Zaccaria P."/>
            <person name="Mewes H.-W."/>
            <person name="Mayer K.F.X."/>
            <person name="Kaul S."/>
            <person name="Town C.D."/>
            <person name="Koo H.L."/>
            <person name="Tallon L.J."/>
            <person name="Jenkins J."/>
            <person name="Rooney T."/>
            <person name="Rizzo M."/>
            <person name="Walts A."/>
            <person name="Utterback T."/>
            <person name="Fujii C.Y."/>
            <person name="Shea T.P."/>
            <person name="Creasy T.H."/>
            <person name="Haas B."/>
            <person name="Maiti R."/>
            <person name="Wu D."/>
            <person name="Peterson J."/>
            <person name="Van Aken S."/>
            <person name="Pai G."/>
            <person name="Militscher J."/>
            <person name="Sellers P."/>
            <person name="Gill J.E."/>
            <person name="Feldblyum T.V."/>
            <person name="Preuss D."/>
            <person name="Lin X."/>
            <person name="Nierman W.C."/>
            <person name="Salzberg S.L."/>
            <person name="White O."/>
            <person name="Venter J.C."/>
            <person name="Fraser C.M."/>
            <person name="Kaneko T."/>
            <person name="Nakamura Y."/>
            <person name="Sato S."/>
            <person name="Kato T."/>
            <person name="Asamizu E."/>
            <person name="Sasamoto S."/>
            <person name="Kimura T."/>
            <person name="Idesawa K."/>
            <person name="Kawashima K."/>
            <person name="Kishida Y."/>
            <person name="Kiyokawa C."/>
            <person name="Kohara M."/>
            <person name="Matsumoto M."/>
            <person name="Matsuno A."/>
            <person name="Muraki A."/>
            <person name="Nakayama S."/>
            <person name="Nakazaki N."/>
            <person name="Shinpo S."/>
            <person name="Takeuchi C."/>
            <person name="Wada T."/>
            <person name="Watanabe A."/>
            <person name="Yamada M."/>
            <person name="Yasuda M."/>
            <person name="Tabata S."/>
        </authorList>
    </citation>
    <scope>NUCLEOTIDE SEQUENCE [LARGE SCALE GENOMIC DNA]</scope>
    <source>
        <strain>cv. Columbia</strain>
    </source>
</reference>
<reference key="3">
    <citation type="journal article" date="2017" name="Plant J.">
        <title>Araport11: a complete reannotation of the Arabidopsis thaliana reference genome.</title>
        <authorList>
            <person name="Cheng C.Y."/>
            <person name="Krishnakumar V."/>
            <person name="Chan A.P."/>
            <person name="Thibaud-Nissen F."/>
            <person name="Schobel S."/>
            <person name="Town C.D."/>
        </authorList>
    </citation>
    <scope>GENOME REANNOTATION</scope>
    <source>
        <strain>cv. Columbia</strain>
    </source>
</reference>
<reference key="4">
    <citation type="journal article" date="2003" name="Science">
        <title>Empirical analysis of transcriptional activity in the Arabidopsis genome.</title>
        <authorList>
            <person name="Yamada K."/>
            <person name="Lim J."/>
            <person name="Dale J.M."/>
            <person name="Chen H."/>
            <person name="Shinn P."/>
            <person name="Palm C.J."/>
            <person name="Southwick A.M."/>
            <person name="Wu H.C."/>
            <person name="Kim C.J."/>
            <person name="Nguyen M."/>
            <person name="Pham P.K."/>
            <person name="Cheuk R.F."/>
            <person name="Karlin-Newmann G."/>
            <person name="Liu S.X."/>
            <person name="Lam B."/>
            <person name="Sakano H."/>
            <person name="Wu T."/>
            <person name="Yu G."/>
            <person name="Miranda M."/>
            <person name="Quach H.L."/>
            <person name="Tripp M."/>
            <person name="Chang C.H."/>
            <person name="Lee J.M."/>
            <person name="Toriumi M.J."/>
            <person name="Chan M.M."/>
            <person name="Tang C.C."/>
            <person name="Onodera C.S."/>
            <person name="Deng J.M."/>
            <person name="Akiyama K."/>
            <person name="Ansari Y."/>
            <person name="Arakawa T."/>
            <person name="Banh J."/>
            <person name="Banno F."/>
            <person name="Bowser L."/>
            <person name="Brooks S.Y."/>
            <person name="Carninci P."/>
            <person name="Chao Q."/>
            <person name="Choy N."/>
            <person name="Enju A."/>
            <person name="Goldsmith A.D."/>
            <person name="Gurjal M."/>
            <person name="Hansen N.F."/>
            <person name="Hayashizaki Y."/>
            <person name="Johnson-Hopson C."/>
            <person name="Hsuan V.W."/>
            <person name="Iida K."/>
            <person name="Karnes M."/>
            <person name="Khan S."/>
            <person name="Koesema E."/>
            <person name="Ishida J."/>
            <person name="Jiang P.X."/>
            <person name="Jones T."/>
            <person name="Kawai J."/>
            <person name="Kamiya A."/>
            <person name="Meyers C."/>
            <person name="Nakajima M."/>
            <person name="Narusaka M."/>
            <person name="Seki M."/>
            <person name="Sakurai T."/>
            <person name="Satou M."/>
            <person name="Tamse R."/>
            <person name="Vaysberg M."/>
            <person name="Wallender E.K."/>
            <person name="Wong C."/>
            <person name="Yamamura Y."/>
            <person name="Yuan S."/>
            <person name="Shinozaki K."/>
            <person name="Davis R.W."/>
            <person name="Theologis A."/>
            <person name="Ecker J.R."/>
        </authorList>
    </citation>
    <scope>NUCLEOTIDE SEQUENCE [LARGE SCALE MRNA]</scope>
    <source>
        <strain>cv. Columbia</strain>
    </source>
</reference>
<reference key="5">
    <citation type="journal article" date="2002" name="Trends Plant Sci.">
        <title>The Dof family of plant transcription factors.</title>
        <authorList>
            <person name="Yanagisawa S."/>
        </authorList>
    </citation>
    <scope>GENE FAMILY</scope>
    <scope>NOMENCLATURE</scope>
</reference>
<reference key="6">
    <citation type="journal article" date="2012" name="J. Exp. Bot.">
        <title>Arabidopsis thaliana DOF6 negatively affects germination in non-after-ripened seeds and interacts with TCP14.</title>
        <authorList>
            <person name="Rueda-Romero P."/>
            <person name="Barrero-Sicilia C."/>
            <person name="Gomez-Cadenas A."/>
            <person name="Carbonero P."/>
            <person name="Onate-Sanchez L."/>
        </authorList>
    </citation>
    <scope>FUNCTION</scope>
    <scope>INTERACTION WITH TCP14</scope>
    <scope>DEVELOPMENTAL STAGE</scope>
</reference>
<reference key="7">
    <citation type="journal article" date="2019" name="Nature">
        <title>Mobile PEAR transcription factors integrate positional cues to prime cambial growth.</title>
        <authorList>
            <person name="Miyashima S."/>
            <person name="Roszak P."/>
            <person name="Sevilem I."/>
            <person name="Toyokura K."/>
            <person name="Blob B."/>
            <person name="Heo J.-O."/>
            <person name="Mellor N."/>
            <person name="Help-Rinta-Rahko H."/>
            <person name="Otero S."/>
            <person name="Smet W."/>
            <person name="Boekschoten M."/>
            <person name="Hooiveld G."/>
            <person name="Hashimoto K."/>
            <person name="Smetana O."/>
            <person name="Siligato R."/>
            <person name="Wallner E.-S."/>
            <person name="Maehoenen A.P."/>
            <person name="Kondo Y."/>
            <person name="Melnyk C.W."/>
            <person name="Greb T."/>
            <person name="Nakajima K."/>
            <person name="Sozzani R."/>
            <person name="Bishopp A."/>
            <person name="De Rybel B."/>
            <person name="Helariutta Y."/>
        </authorList>
    </citation>
    <scope>FUNCTION</scope>
    <scope>DISRUPTION PHENOTYPE</scope>
    <scope>TISSUE SPECIFICITY</scope>
    <scope>INDUCTION BY CYTOKININ</scope>
</reference>
<name>DOF32_ARATH</name>
<dbReference type="EMBL" id="AJ243033">
    <property type="protein sequence ID" value="CAB51901.1"/>
    <property type="molecule type" value="mRNA"/>
</dbReference>
<dbReference type="EMBL" id="AL138657">
    <property type="protein sequence ID" value="CAB75490.1"/>
    <property type="molecule type" value="Genomic_DNA"/>
</dbReference>
<dbReference type="EMBL" id="CP002686">
    <property type="protein sequence ID" value="AEE78050.1"/>
    <property type="molecule type" value="Genomic_DNA"/>
</dbReference>
<dbReference type="EMBL" id="AY062783">
    <property type="protein sequence ID" value="AAL32861.1"/>
    <property type="molecule type" value="mRNA"/>
</dbReference>
<dbReference type="EMBL" id="BT006284">
    <property type="protein sequence ID" value="AAP13392.1"/>
    <property type="molecule type" value="mRNA"/>
</dbReference>
<dbReference type="PIR" id="T47501">
    <property type="entry name" value="T47501"/>
</dbReference>
<dbReference type="RefSeq" id="NP_190147.1">
    <property type="nucleotide sequence ID" value="NM_114430.3"/>
</dbReference>
<dbReference type="SMR" id="Q9M1E6"/>
<dbReference type="BioGRID" id="9023">
    <property type="interactions" value="8"/>
</dbReference>
<dbReference type="FunCoup" id="Q9M1E6">
    <property type="interactions" value="26"/>
</dbReference>
<dbReference type="IntAct" id="Q9M1E6">
    <property type="interactions" value="3"/>
</dbReference>
<dbReference type="STRING" id="3702.Q9M1E6"/>
<dbReference type="PaxDb" id="3702-AT3G45610.1"/>
<dbReference type="EnsemblPlants" id="AT3G45610.1">
    <property type="protein sequence ID" value="AT3G45610.1"/>
    <property type="gene ID" value="AT3G45610"/>
</dbReference>
<dbReference type="GeneID" id="823703"/>
<dbReference type="Gramene" id="AT3G45610.1">
    <property type="protein sequence ID" value="AT3G45610.1"/>
    <property type="gene ID" value="AT3G45610"/>
</dbReference>
<dbReference type="KEGG" id="ath:AT3G45610"/>
<dbReference type="Araport" id="AT3G45610"/>
<dbReference type="TAIR" id="AT3G45610">
    <property type="gene designation" value="DOF6"/>
</dbReference>
<dbReference type="eggNOG" id="ENOG502RB9Y">
    <property type="taxonomic scope" value="Eukaryota"/>
</dbReference>
<dbReference type="HOGENOM" id="CLU_036438_2_1_1"/>
<dbReference type="InParanoid" id="Q9M1E6"/>
<dbReference type="OMA" id="DYSSMHQ"/>
<dbReference type="PhylomeDB" id="Q9M1E6"/>
<dbReference type="PRO" id="PR:Q9M1E6"/>
<dbReference type="Proteomes" id="UP000006548">
    <property type="component" value="Chromosome 3"/>
</dbReference>
<dbReference type="ExpressionAtlas" id="Q9M1E6">
    <property type="expression patterns" value="baseline and differential"/>
</dbReference>
<dbReference type="GO" id="GO:0005634">
    <property type="term" value="C:nucleus"/>
    <property type="evidence" value="ECO:0000314"/>
    <property type="project" value="TAIR"/>
</dbReference>
<dbReference type="GO" id="GO:0003700">
    <property type="term" value="F:DNA-binding transcription factor activity"/>
    <property type="evidence" value="ECO:0000250"/>
    <property type="project" value="TAIR"/>
</dbReference>
<dbReference type="GO" id="GO:0000976">
    <property type="term" value="F:transcription cis-regulatory region binding"/>
    <property type="evidence" value="ECO:0000353"/>
    <property type="project" value="TAIR"/>
</dbReference>
<dbReference type="GO" id="GO:0008270">
    <property type="term" value="F:zinc ion binding"/>
    <property type="evidence" value="ECO:0007669"/>
    <property type="project" value="UniProtKB-KW"/>
</dbReference>
<dbReference type="GO" id="GO:0006355">
    <property type="term" value="P:regulation of DNA-templated transcription"/>
    <property type="evidence" value="ECO:0000304"/>
    <property type="project" value="TAIR"/>
</dbReference>
<dbReference type="GO" id="GO:0090057">
    <property type="term" value="P:root radial pattern formation"/>
    <property type="evidence" value="ECO:0000316"/>
    <property type="project" value="TAIR"/>
</dbReference>
<dbReference type="InterPro" id="IPR045174">
    <property type="entry name" value="Dof"/>
</dbReference>
<dbReference type="InterPro" id="IPR003851">
    <property type="entry name" value="Znf_Dof"/>
</dbReference>
<dbReference type="PANTHER" id="PTHR31992">
    <property type="entry name" value="DOF ZINC FINGER PROTEIN DOF1.4-RELATED"/>
    <property type="match status" value="1"/>
</dbReference>
<dbReference type="PANTHER" id="PTHR31992:SF221">
    <property type="entry name" value="DOF ZINC FINGER PROTEIN DOF3.2-RELATED"/>
    <property type="match status" value="1"/>
</dbReference>
<dbReference type="Pfam" id="PF02701">
    <property type="entry name" value="Zn_ribbon_Dof"/>
    <property type="match status" value="1"/>
</dbReference>
<dbReference type="PROSITE" id="PS01361">
    <property type="entry name" value="ZF_DOF_1"/>
    <property type="match status" value="1"/>
</dbReference>
<dbReference type="PROSITE" id="PS50884">
    <property type="entry name" value="ZF_DOF_2"/>
    <property type="match status" value="1"/>
</dbReference>
<accession>Q9M1E6</accession>
<accession>Q9SUJ4</accession>
<comment type="function">
    <text evidence="3 4">Transcription factor that negatively affects seed germination and opposes TCP14 function in the regulation of a specific set of abscisic acid-related genes (PubMed:22155632). The PEAR proteins (e.g. DOF2.4, DOF5.1, DOF3.2, DOF1.1, DOF5.6 and DOF5.3) activate gene expression that promotes radial growth of protophloem sieve elements (PubMed:30626969).</text>
</comment>
<comment type="subunit">
    <text evidence="3">Interacts with TCP14.</text>
</comment>
<comment type="subcellular location">
    <subcellularLocation>
        <location evidence="1">Nucleus</location>
    </subcellularLocation>
</comment>
<comment type="tissue specificity">
    <text evidence="4">The PEAR proteins (e.g. DOF2.4, DOF5.1, DOF3.2, DOF1.1, DOF5.6 and DOF5.3) form a short-range concentration gradient that peaks at protophloem sieve elements (PSE).</text>
</comment>
<comment type="developmental stage">
    <text evidence="3">The transcript levels of the gene accumulate in dry seeds and decay gradually during after-ripening and also upon seed imbibition.</text>
</comment>
<comment type="induction">
    <text evidence="4">By cytokinin in procambium.</text>
</comment>
<comment type="disruption phenotype">
    <text evidence="4">The pear1 pear2 dof6 tmo6 quadruple mutant plants showed a uniform reduction in radial growth, associated with compromised symplastic trafficking.</text>
</comment>
<gene>
    <name evidence="5" type="primary">DOF3.2</name>
    <name evidence="6" type="synonym">DOF6</name>
    <name evidence="9" type="ordered locus">At3g45610</name>
    <name evidence="10" type="ORF">F9K21.190</name>
</gene>
<protein>
    <recommendedName>
        <fullName evidence="5">Dof zinc finger protein DOF3.2</fullName>
        <shortName evidence="5">AtDOF3.2</shortName>
    </recommendedName>
    <alternativeName>
        <fullName evidence="7">Protein PHLOEM EARLY DOF6</fullName>
    </alternativeName>
</protein>
<proteinExistence type="evidence at protein level"/>
<evidence type="ECO:0000255" key="1">
    <source>
        <dbReference type="PROSITE-ProRule" id="PRU00071"/>
    </source>
</evidence>
<evidence type="ECO:0000256" key="2">
    <source>
        <dbReference type="SAM" id="MobiDB-lite"/>
    </source>
</evidence>
<evidence type="ECO:0000269" key="3">
    <source>
    </source>
</evidence>
<evidence type="ECO:0000269" key="4">
    <source>
    </source>
</evidence>
<evidence type="ECO:0000303" key="5">
    <source>
    </source>
</evidence>
<evidence type="ECO:0000303" key="6">
    <source>
    </source>
</evidence>
<evidence type="ECO:0000303" key="7">
    <source>
    </source>
</evidence>
<evidence type="ECO:0000305" key="8"/>
<evidence type="ECO:0000312" key="9">
    <source>
        <dbReference type="Araport" id="AT3G45610"/>
    </source>
</evidence>
<evidence type="ECO:0000312" key="10">
    <source>
        <dbReference type="EMBL" id="CAB75490.1"/>
    </source>
</evidence>
<keyword id="KW-0238">DNA-binding</keyword>
<keyword id="KW-0479">Metal-binding</keyword>
<keyword id="KW-0539">Nucleus</keyword>
<keyword id="KW-1185">Reference proteome</keyword>
<keyword id="KW-0804">Transcription</keyword>
<keyword id="KW-0805">Transcription regulation</keyword>
<keyword id="KW-0862">Zinc</keyword>
<keyword id="KW-0863">Zinc-finger</keyword>
<organism>
    <name type="scientific">Arabidopsis thaliana</name>
    <name type="common">Mouse-ear cress</name>
    <dbReference type="NCBI Taxonomy" id="3702"/>
    <lineage>
        <taxon>Eukaryota</taxon>
        <taxon>Viridiplantae</taxon>
        <taxon>Streptophyta</taxon>
        <taxon>Embryophyta</taxon>
        <taxon>Tracheophyta</taxon>
        <taxon>Spermatophyta</taxon>
        <taxon>Magnoliopsida</taxon>
        <taxon>eudicotyledons</taxon>
        <taxon>Gunneridae</taxon>
        <taxon>Pentapetalae</taxon>
        <taxon>rosids</taxon>
        <taxon>malvids</taxon>
        <taxon>Brassicales</taxon>
        <taxon>Brassicaceae</taxon>
        <taxon>Camelineae</taxon>
        <taxon>Arabidopsis</taxon>
    </lineage>
</organism>
<sequence>MDYSSMHQNVMGVSSCSTQDYQNQKKPLSATRPAPPEQSLRCPRCDSTNTKFCYYNNYSLSQPRYFCKSCRRYWTKGGILRNIPIGGAYRKHKRSSSATKSLRTTPEPTMTHDGKSFPTASFGYNNNNISNEQMELGLAYALLNKQPLGVSSHLGFGSSQSPMAMDGVYGTTSHQMENTGYAFGNGGGGMEQMATSDPNRVLWGFPWQMNMGGGSGHGHGHVDQIDSGREIWSSTVNYINTGALL</sequence>
<feature type="chain" id="PRO_0000074278" description="Dof zinc finger protein DOF3.2">
    <location>
        <begin position="1"/>
        <end position="245"/>
    </location>
</feature>
<feature type="zinc finger region" description="Dof-type" evidence="1">
    <location>
        <begin position="40"/>
        <end position="94"/>
    </location>
</feature>
<feature type="region of interest" description="Disordered" evidence="2">
    <location>
        <begin position="15"/>
        <end position="41"/>
    </location>
</feature>
<feature type="region of interest" description="Disordered" evidence="2">
    <location>
        <begin position="91"/>
        <end position="118"/>
    </location>
</feature>
<feature type="compositionally biased region" description="Polar residues" evidence="2">
    <location>
        <begin position="15"/>
        <end position="26"/>
    </location>
</feature>
<feature type="compositionally biased region" description="Polar residues" evidence="2">
    <location>
        <begin position="96"/>
        <end position="108"/>
    </location>
</feature>
<feature type="binding site" evidence="1">
    <location>
        <position position="42"/>
    </location>
    <ligand>
        <name>Zn(2+)</name>
        <dbReference type="ChEBI" id="CHEBI:29105"/>
    </ligand>
</feature>
<feature type="binding site" evidence="1">
    <location>
        <position position="45"/>
    </location>
    <ligand>
        <name>Zn(2+)</name>
        <dbReference type="ChEBI" id="CHEBI:29105"/>
    </ligand>
</feature>
<feature type="binding site" evidence="1">
    <location>
        <position position="67"/>
    </location>
    <ligand>
        <name>Zn(2+)</name>
        <dbReference type="ChEBI" id="CHEBI:29105"/>
    </ligand>
</feature>
<feature type="binding site" evidence="1">
    <location>
        <position position="70"/>
    </location>
    <ligand>
        <name>Zn(2+)</name>
        <dbReference type="ChEBI" id="CHEBI:29105"/>
    </ligand>
</feature>
<feature type="sequence conflict" description="In Ref. 1; CAB51901." evidence="8" ref="1">
    <original>T</original>
    <variation>S</variation>
    <location>
        <position position="18"/>
    </location>
</feature>